<protein>
    <recommendedName>
        <fullName>WD repeat and FYVE domain-containing protein 3</fullName>
    </recommendedName>
    <alternativeName>
        <fullName>Beach domain, WD repeat and FYVE domain-containing protein 1</fullName>
        <shortName>BWF1</shortName>
    </alternativeName>
</protein>
<keyword id="KW-0025">Alternative splicing</keyword>
<keyword id="KW-0072">Autophagy</keyword>
<keyword id="KW-0966">Cell projection</keyword>
<keyword id="KW-0963">Cytoplasm</keyword>
<keyword id="KW-0217">Developmental protein</keyword>
<keyword id="KW-0446">Lipid-binding</keyword>
<keyword id="KW-0472">Membrane</keyword>
<keyword id="KW-0479">Metal-binding</keyword>
<keyword id="KW-0539">Nucleus</keyword>
<keyword id="KW-0597">Phosphoprotein</keyword>
<keyword id="KW-1185">Reference proteome</keyword>
<keyword id="KW-0677">Repeat</keyword>
<keyword id="KW-0853">WD repeat</keyword>
<keyword id="KW-0862">Zinc</keyword>
<keyword id="KW-0863">Zinc-finger</keyword>
<gene>
    <name type="primary">Wdfy3</name>
</gene>
<organism>
    <name type="scientific">Mus musculus</name>
    <name type="common">Mouse</name>
    <dbReference type="NCBI Taxonomy" id="10090"/>
    <lineage>
        <taxon>Eukaryota</taxon>
        <taxon>Metazoa</taxon>
        <taxon>Chordata</taxon>
        <taxon>Craniata</taxon>
        <taxon>Vertebrata</taxon>
        <taxon>Euteleostomi</taxon>
        <taxon>Mammalia</taxon>
        <taxon>Eutheria</taxon>
        <taxon>Euarchontoglires</taxon>
        <taxon>Glires</taxon>
        <taxon>Rodentia</taxon>
        <taxon>Myomorpha</taxon>
        <taxon>Muroidea</taxon>
        <taxon>Muridae</taxon>
        <taxon>Murinae</taxon>
        <taxon>Mus</taxon>
        <taxon>Mus</taxon>
    </lineage>
</organism>
<proteinExistence type="evidence at protein level"/>
<evidence type="ECO:0000250" key="1"/>
<evidence type="ECO:0000250" key="2">
    <source>
        <dbReference type="UniProtKB" id="Q8IZQ1"/>
    </source>
</evidence>
<evidence type="ECO:0000255" key="3">
    <source>
        <dbReference type="PROSITE-ProRule" id="PRU00026"/>
    </source>
</evidence>
<evidence type="ECO:0000255" key="4">
    <source>
        <dbReference type="PROSITE-ProRule" id="PRU00091"/>
    </source>
</evidence>
<evidence type="ECO:0000255" key="5">
    <source>
        <dbReference type="PROSITE-ProRule" id="PRU01119"/>
    </source>
</evidence>
<evidence type="ECO:0000256" key="6">
    <source>
        <dbReference type="SAM" id="MobiDB-lite"/>
    </source>
</evidence>
<evidence type="ECO:0000269" key="7">
    <source>
    </source>
</evidence>
<evidence type="ECO:0000269" key="8">
    <source>
    </source>
</evidence>
<evidence type="ECO:0000269" key="9">
    <source>
    </source>
</evidence>
<evidence type="ECO:0000269" key="10">
    <source>
    </source>
</evidence>
<evidence type="ECO:0000269" key="11">
    <source>
    </source>
</evidence>
<evidence type="ECO:0000303" key="12">
    <source>
    </source>
</evidence>
<evidence type="ECO:0000303" key="13">
    <source>
    </source>
</evidence>
<evidence type="ECO:0000305" key="14"/>
<evidence type="ECO:0007744" key="15">
    <source>
    </source>
</evidence>
<accession>Q6VNB8</accession>
<accession>Q8C8H7</accession>
<comment type="function">
    <text evidence="2 9 10 11">Required for selective macroautophagy (aggrephagy). Acts as an adapter protein by linking specific proteins destined for degradation to the core autophagic machinery members, such as the ATG5-ATG12-ATG16L E3-like ligase, SQSTM1 and LC3. Involved in the formation and autophagic degradation of cytoplasmic ubiquitin-containing inclusions (p62 bodies, ALIS/aggresome-like induced structures) (By similarity). Important for normal brain development (PubMed:25198012, PubMed:27648578). Essential for the formation of axonal tracts throughout the brain and spinal cord, including the formation of the major forebrain commissures. Involved in the ability of neural cells to respond to guidance cues. Required for cortical neurons to respond to the trophic effects of netrin-1/NTN1 (PubMed:27648578). Regulates Wnt signaling through the removal of DVL3 aggregates, likely in an autophagy-dependent manner. This process may be important for the determination of brain size during embryonic development (By similarity). May regulate osteoclastogenesis by acting on the TNFSF11/RANKL - TRAF6 pathway (PubMed:27330028). After cytokinetic abscission, involved in midbody remnant degradation. In vitro strongly binds to phosphatidylinositol 3-phosphate (PtdIns3P) (By similarity).</text>
</comment>
<comment type="subunit">
    <text evidence="2 10">Directly interacts with ATG5 and associates with the ATG12-ATG5-ATG16L complex. Interacts with p62/SQSTM1. Directly interacts with GABARAP, GABARAPL1 and GABARAPL2; the interaction with GABARAP is required for WDFY3 recruitment to MAP1LC3B-positive p62/SQSTM1 bodies. Weakly interacts with MAP1LC3C; this interaction is direct. Does not interact with MAP1LC3A, nor MAP1LC3B (By similarity). Interacts with TRAF6 (PubMed:27330028).</text>
</comment>
<comment type="subcellular location">
    <subcellularLocation>
        <location evidence="2">Nucleus</location>
    </subcellularLocation>
    <subcellularLocation>
        <location evidence="8 9 10">Cytoplasm</location>
        <location evidence="8 9 10">Cytosol</location>
    </subcellularLocation>
    <subcellularLocation>
        <location evidence="2">Nucleus</location>
        <location evidence="2">PML body</location>
    </subcellularLocation>
    <subcellularLocation>
        <location evidence="11">Membrane</location>
        <topology evidence="2">Peripheral membrane protein</topology>
        <orientation evidence="14">Cytoplasmic side</orientation>
    </subcellularLocation>
    <subcellularLocation>
        <location evidence="11">Perikaryon</location>
    </subcellularLocation>
    <subcellularLocation>
        <location evidence="11">Cell projection</location>
        <location evidence="11">Axon</location>
    </subcellularLocation>
    <text evidence="2 11">Relocalization from the nucleus to the cytosol is stimulated by cellular stress, such as starvation or proteasomal inhibition. In the cytosol of starved cells, colocalizes with autophagic structures. This redistribution is dependent on p62/SQSTM1. When nuclear export is blocked by treatment with leptomycin B, accumulates in nuclear bodies, that completely or partially colocalize with promyelocytic leukemia (PML) bodies (By similarity). Localizes throughout neurons, including within axons. In neurons, enriched in the light membrane fraction along with the synaptosomal membrane protein synaptophysin and the membrane-bound form of LC3/MAP1LC3A/MAP1LC3B, called LC3-II, a classic marker for autophagic vesicles (PubMed:27648578).</text>
</comment>
<comment type="alternative products">
    <event type="alternative splicing"/>
    <isoform>
        <id>Q6VNB8-1</id>
        <name>1</name>
        <name evidence="13">a</name>
        <sequence type="displayed"/>
    </isoform>
    <isoform>
        <id>Q6VNB8-2</id>
        <name>2</name>
        <sequence type="described" ref="VSP_019477 VSP_019478"/>
    </isoform>
</comment>
<comment type="tissue specificity">
    <text evidence="7 8 10 11">Widely expressed, with high levels in the brain (at protein level) (PubMed:15292400, PubMed:15342963, PubMed:27648578). In the brain, expressed by both neuronal and non-neuronal cells (PubMed:27648578). Expressed in bones, in the periosteum, cartilage, growth plate, trabeculae of the primary spongiosa, and scattered hematopoietic cells within the medullary cavity. Tends to be expressed at lower levels in the hypertrophic zone compared to trabeculae. Expressed in osteoblasts, osteoclasts and bone-marrow derived macrophages (PubMed:27330028).</text>
</comment>
<comment type="developmental stage">
    <text evidence="8 9 11">Detected in the developing central nervous system already at 11.5 dpc (PubMed:27648578). At 13.5 dpc, strong expression in the proliferative zones surrounding the lateral ventricle and weaker expression throughout the developing forebrain. At 14.5 dpc, highest expression within the proliferative regions surrounding the ventricles. Specifically expressed in the leptomeninges, cortical intermediate zone, choroid plexus and in radial glia cells within the ventricular zone (VZ). Within the VZ, expression is observed in a subset of cells actively undergoing mitosis. The expression persists through all phases of cell division, but decreases during telophase. Expression is often maintained in radial units, where it is the highest in progenitors closest to the ventricle, then gradually diminishes as distance from the ventricular surface increases (PubMed:15342963, PubMed:25198012). Expression levels in the brain decrease after birth (at protein level) (PubMed:15342963).</text>
</comment>
<comment type="domain">
    <text evidence="2">The LIR (LC3-interacting region) motif mediates the interaction with MAP1LC3C and other ATG8 family members.</text>
</comment>
<comment type="domain">
    <text evidence="2">The FYVE domain mediates binding to phosphatidylinositol 3-phosphate (PtdIns3P).</text>
</comment>
<comment type="disruption phenotype">
    <text evidence="9 11">Homozygous mice are born at close to the expected Mendelian ratios, but die perinatally (PubMed:25198012, PubMed:27648578). Newborn animals exhibit striking abnormalities in the forebrain, midbrain and hindbrain, including visibly smaller brains and gross enlargement of the lateral ventricles. There is an apparent loss and disorganization of interhemispheric axonal tracts throughout the brain (PubMed:25198012, PubMed:27648578).</text>
</comment>
<comment type="sequence caution" evidence="14">
    <conflict type="frameshift">
        <sequence resource="EMBL-CDS" id="BAC32952"/>
    </conflict>
</comment>
<name>WDFY3_MOUSE</name>
<dbReference type="EMBL" id="AY336569">
    <property type="protein sequence ID" value="AAQ84516.1"/>
    <property type="molecule type" value="mRNA"/>
</dbReference>
<dbReference type="EMBL" id="AK047077">
    <property type="protein sequence ID" value="BAC32952.1"/>
    <property type="status" value="ALT_FRAME"/>
    <property type="molecule type" value="mRNA"/>
</dbReference>
<dbReference type="CCDS" id="CCDS19473.1">
    <molecule id="Q6VNB8-1"/>
</dbReference>
<dbReference type="RefSeq" id="NP_766470.2">
    <molecule id="Q6VNB8-1"/>
    <property type="nucleotide sequence ID" value="NM_172882.3"/>
</dbReference>
<dbReference type="SMR" id="Q6VNB8"/>
<dbReference type="BioGRID" id="215181">
    <property type="interactions" value="8"/>
</dbReference>
<dbReference type="FunCoup" id="Q6VNB8">
    <property type="interactions" value="3303"/>
</dbReference>
<dbReference type="IntAct" id="Q6VNB8">
    <property type="interactions" value="3"/>
</dbReference>
<dbReference type="STRING" id="10090.ENSMUSP00000052607"/>
<dbReference type="GlyGen" id="Q6VNB8">
    <property type="glycosylation" value="12 sites, 1 N-linked glycan (1 site), 1 O-linked glycan (7 sites)"/>
</dbReference>
<dbReference type="iPTMnet" id="Q6VNB8"/>
<dbReference type="PhosphoSitePlus" id="Q6VNB8"/>
<dbReference type="SwissPalm" id="Q6VNB8"/>
<dbReference type="jPOST" id="Q6VNB8"/>
<dbReference type="PaxDb" id="10090-ENSMUSP00000052607"/>
<dbReference type="PeptideAtlas" id="Q6VNB8"/>
<dbReference type="ProteomicsDB" id="299966">
    <molecule id="Q6VNB8-1"/>
</dbReference>
<dbReference type="ProteomicsDB" id="299967">
    <molecule id="Q6VNB8-2"/>
</dbReference>
<dbReference type="Pumba" id="Q6VNB8"/>
<dbReference type="Antibodypedia" id="25252">
    <property type="antibodies" value="255 antibodies from 26 providers"/>
</dbReference>
<dbReference type="DNASU" id="72145"/>
<dbReference type="Ensembl" id="ENSMUST00000053177.14">
    <molecule id="Q6VNB8-1"/>
    <property type="protein sequence ID" value="ENSMUSP00000052607.8"/>
    <property type="gene ID" value="ENSMUSG00000043940.16"/>
</dbReference>
<dbReference type="Ensembl" id="ENSMUST00000174698.2">
    <molecule id="Q6VNB8-2"/>
    <property type="protein sequence ID" value="ENSMUSP00000134541.2"/>
    <property type="gene ID" value="ENSMUSG00000043940.16"/>
</dbReference>
<dbReference type="GeneID" id="72145"/>
<dbReference type="KEGG" id="mmu:72145"/>
<dbReference type="UCSC" id="uc008yis.2">
    <molecule id="Q6VNB8-1"/>
    <property type="organism name" value="mouse"/>
</dbReference>
<dbReference type="UCSC" id="uc008yit.1">
    <molecule id="Q6VNB8-2"/>
    <property type="organism name" value="mouse"/>
</dbReference>
<dbReference type="AGR" id="MGI:1096875"/>
<dbReference type="CTD" id="23001"/>
<dbReference type="MGI" id="MGI:1096875">
    <property type="gene designation" value="Wdfy3"/>
</dbReference>
<dbReference type="VEuPathDB" id="HostDB:ENSMUSG00000043940"/>
<dbReference type="eggNOG" id="KOG1786">
    <property type="taxonomic scope" value="Eukaryota"/>
</dbReference>
<dbReference type="eggNOG" id="KOG1788">
    <property type="taxonomic scope" value="Eukaryota"/>
</dbReference>
<dbReference type="GeneTree" id="ENSGT00940000155680"/>
<dbReference type="HOGENOM" id="CLU_000175_5_0_1"/>
<dbReference type="InParanoid" id="Q6VNB8"/>
<dbReference type="OMA" id="GVCHLIE"/>
<dbReference type="OrthoDB" id="10018316at2759"/>
<dbReference type="PhylomeDB" id="Q6VNB8"/>
<dbReference type="TreeFam" id="TF313658"/>
<dbReference type="BioGRID-ORCS" id="72145">
    <property type="hits" value="2 hits in 77 CRISPR screens"/>
</dbReference>
<dbReference type="ChiTaRS" id="Wdfy3">
    <property type="organism name" value="mouse"/>
</dbReference>
<dbReference type="PRO" id="PR:Q6VNB8"/>
<dbReference type="Proteomes" id="UP000000589">
    <property type="component" value="Chromosome 5"/>
</dbReference>
<dbReference type="RNAct" id="Q6VNB8">
    <property type="molecule type" value="protein"/>
</dbReference>
<dbReference type="Bgee" id="ENSMUSG00000043940">
    <property type="expression patterns" value="Expressed in mammillary body and 252 other cell types or tissues"/>
</dbReference>
<dbReference type="ExpressionAtlas" id="Q6VNB8">
    <property type="expression patterns" value="baseline and differential"/>
</dbReference>
<dbReference type="GO" id="GO:0000421">
    <property type="term" value="C:autophagosome membrane"/>
    <property type="evidence" value="ECO:0000266"/>
    <property type="project" value="MGI"/>
</dbReference>
<dbReference type="GO" id="GO:0030424">
    <property type="term" value="C:axon"/>
    <property type="evidence" value="ECO:0007669"/>
    <property type="project" value="UniProtKB-SubCell"/>
</dbReference>
<dbReference type="GO" id="GO:0005737">
    <property type="term" value="C:cytoplasm"/>
    <property type="evidence" value="ECO:0000314"/>
    <property type="project" value="MGI"/>
</dbReference>
<dbReference type="GO" id="GO:0005829">
    <property type="term" value="C:cytosol"/>
    <property type="evidence" value="ECO:0007669"/>
    <property type="project" value="UniProtKB-SubCell"/>
</dbReference>
<dbReference type="GO" id="GO:0016234">
    <property type="term" value="C:inclusion body"/>
    <property type="evidence" value="ECO:0000250"/>
    <property type="project" value="UniProtKB"/>
</dbReference>
<dbReference type="GO" id="GO:0016020">
    <property type="term" value="C:membrane"/>
    <property type="evidence" value="ECO:0000266"/>
    <property type="project" value="MGI"/>
</dbReference>
<dbReference type="GO" id="GO:0005635">
    <property type="term" value="C:nuclear envelope"/>
    <property type="evidence" value="ECO:0000266"/>
    <property type="project" value="MGI"/>
</dbReference>
<dbReference type="GO" id="GO:0043204">
    <property type="term" value="C:perikaryon"/>
    <property type="evidence" value="ECO:0007669"/>
    <property type="project" value="UniProtKB-SubCell"/>
</dbReference>
<dbReference type="GO" id="GO:0016605">
    <property type="term" value="C:PML body"/>
    <property type="evidence" value="ECO:0000250"/>
    <property type="project" value="UniProtKB"/>
</dbReference>
<dbReference type="GO" id="GO:0005545">
    <property type="term" value="F:1-phosphatidylinositol binding"/>
    <property type="evidence" value="ECO:0000266"/>
    <property type="project" value="MGI"/>
</dbReference>
<dbReference type="GO" id="GO:0003831">
    <property type="term" value="F:beta-N-acetylglucosaminylglycopeptide beta-1,4-galactosyltransferase activity"/>
    <property type="evidence" value="ECO:0000314"/>
    <property type="project" value="MGI"/>
</dbReference>
<dbReference type="GO" id="GO:0008270">
    <property type="term" value="F:zinc ion binding"/>
    <property type="evidence" value="ECO:0007669"/>
    <property type="project" value="UniProtKB-KW"/>
</dbReference>
<dbReference type="GO" id="GO:0035973">
    <property type="term" value="P:aggrephagy"/>
    <property type="evidence" value="ECO:0000250"/>
    <property type="project" value="UniProtKB"/>
</dbReference>
<dbReference type="CDD" id="cd06071">
    <property type="entry name" value="Beach"/>
    <property type="match status" value="1"/>
</dbReference>
<dbReference type="CDD" id="cd15719">
    <property type="entry name" value="FYVE_WDFY3"/>
    <property type="match status" value="1"/>
</dbReference>
<dbReference type="CDD" id="cd01201">
    <property type="entry name" value="PH_BEACH"/>
    <property type="match status" value="1"/>
</dbReference>
<dbReference type="FunFam" id="3.30.40.10:FF:000028">
    <property type="entry name" value="Putative hepatocyte growth factor-regulated tyrosine kinase substrate"/>
    <property type="match status" value="1"/>
</dbReference>
<dbReference type="FunFam" id="1.10.1540.10:FF:000002">
    <property type="entry name" value="WD repeat and FYVE domain containing 3"/>
    <property type="match status" value="1"/>
</dbReference>
<dbReference type="FunFam" id="2.30.29.30:FF:000095">
    <property type="entry name" value="WD repeat and FYVE domain containing 3"/>
    <property type="match status" value="1"/>
</dbReference>
<dbReference type="FunFam" id="2.130.10.10:FF:000293">
    <property type="entry name" value="WD repeat and FYVE domain-containing protein 3"/>
    <property type="match status" value="1"/>
</dbReference>
<dbReference type="Gene3D" id="1.10.1540.10">
    <property type="entry name" value="BEACH domain"/>
    <property type="match status" value="1"/>
</dbReference>
<dbReference type="Gene3D" id="1.25.10.10">
    <property type="entry name" value="Leucine-rich Repeat Variant"/>
    <property type="match status" value="1"/>
</dbReference>
<dbReference type="Gene3D" id="2.30.29.30">
    <property type="entry name" value="Pleckstrin-homology domain (PH domain)/Phosphotyrosine-binding domain (PTB)"/>
    <property type="match status" value="1"/>
</dbReference>
<dbReference type="Gene3D" id="2.130.10.10">
    <property type="entry name" value="YVTN repeat-like/Quinoprotein amine dehydrogenase"/>
    <property type="match status" value="1"/>
</dbReference>
<dbReference type="Gene3D" id="3.30.40.10">
    <property type="entry name" value="Zinc/RING finger domain, C3HC4 (zinc finger)"/>
    <property type="match status" value="1"/>
</dbReference>
<dbReference type="InterPro" id="IPR056252">
    <property type="entry name" value="Alfy-like_Arm-like"/>
</dbReference>
<dbReference type="InterPro" id="IPR011989">
    <property type="entry name" value="ARM-like"/>
</dbReference>
<dbReference type="InterPro" id="IPR016024">
    <property type="entry name" value="ARM-type_fold"/>
</dbReference>
<dbReference type="InterPro" id="IPR000409">
    <property type="entry name" value="BEACH_dom"/>
</dbReference>
<dbReference type="InterPro" id="IPR036372">
    <property type="entry name" value="BEACH_dom_sf"/>
</dbReference>
<dbReference type="InterPro" id="IPR051944">
    <property type="entry name" value="BEACH_domain_protein"/>
</dbReference>
<dbReference type="InterPro" id="IPR013320">
    <property type="entry name" value="ConA-like_dom_sf"/>
</dbReference>
<dbReference type="InterPro" id="IPR023362">
    <property type="entry name" value="PH-BEACH_dom"/>
</dbReference>
<dbReference type="InterPro" id="IPR011993">
    <property type="entry name" value="PH-like_dom_sf"/>
</dbReference>
<dbReference type="InterPro" id="IPR015943">
    <property type="entry name" value="WD40/YVTN_repeat-like_dom_sf"/>
</dbReference>
<dbReference type="InterPro" id="IPR019775">
    <property type="entry name" value="WD40_repeat_CS"/>
</dbReference>
<dbReference type="InterPro" id="IPR036322">
    <property type="entry name" value="WD40_repeat_dom_sf"/>
</dbReference>
<dbReference type="InterPro" id="IPR001680">
    <property type="entry name" value="WD40_rpt"/>
</dbReference>
<dbReference type="InterPro" id="IPR000306">
    <property type="entry name" value="Znf_FYVE"/>
</dbReference>
<dbReference type="InterPro" id="IPR017455">
    <property type="entry name" value="Znf_FYVE-rel"/>
</dbReference>
<dbReference type="InterPro" id="IPR011011">
    <property type="entry name" value="Znf_FYVE_PHD"/>
</dbReference>
<dbReference type="InterPro" id="IPR013083">
    <property type="entry name" value="Znf_RING/FYVE/PHD"/>
</dbReference>
<dbReference type="PANTHER" id="PTHR46108">
    <property type="entry name" value="BLUE CHEESE"/>
    <property type="match status" value="1"/>
</dbReference>
<dbReference type="PANTHER" id="PTHR46108:SF1">
    <property type="entry name" value="WD REPEAT AND FYVE DOMAIN-CONTAINING PROTEIN 3"/>
    <property type="match status" value="1"/>
</dbReference>
<dbReference type="Pfam" id="PF23295">
    <property type="entry name" value="Arm_4"/>
    <property type="match status" value="1"/>
</dbReference>
<dbReference type="Pfam" id="PF02138">
    <property type="entry name" value="Beach"/>
    <property type="match status" value="1"/>
</dbReference>
<dbReference type="Pfam" id="PF01363">
    <property type="entry name" value="FYVE"/>
    <property type="match status" value="1"/>
</dbReference>
<dbReference type="Pfam" id="PF14844">
    <property type="entry name" value="PH_BEACH"/>
    <property type="match status" value="1"/>
</dbReference>
<dbReference type="Pfam" id="PF00400">
    <property type="entry name" value="WD40"/>
    <property type="match status" value="2"/>
</dbReference>
<dbReference type="SMART" id="SM01026">
    <property type="entry name" value="Beach"/>
    <property type="match status" value="1"/>
</dbReference>
<dbReference type="SMART" id="SM00064">
    <property type="entry name" value="FYVE"/>
    <property type="match status" value="1"/>
</dbReference>
<dbReference type="SMART" id="SM00320">
    <property type="entry name" value="WD40"/>
    <property type="match status" value="5"/>
</dbReference>
<dbReference type="SUPFAM" id="SSF48371">
    <property type="entry name" value="ARM repeat"/>
    <property type="match status" value="1"/>
</dbReference>
<dbReference type="SUPFAM" id="SSF81837">
    <property type="entry name" value="BEACH domain"/>
    <property type="match status" value="1"/>
</dbReference>
<dbReference type="SUPFAM" id="SSF49899">
    <property type="entry name" value="Concanavalin A-like lectins/glucanases"/>
    <property type="match status" value="1"/>
</dbReference>
<dbReference type="SUPFAM" id="SSF57903">
    <property type="entry name" value="FYVE/PHD zinc finger"/>
    <property type="match status" value="1"/>
</dbReference>
<dbReference type="SUPFAM" id="SSF50729">
    <property type="entry name" value="PH domain-like"/>
    <property type="match status" value="1"/>
</dbReference>
<dbReference type="SUPFAM" id="SSF50978">
    <property type="entry name" value="WD40 repeat-like"/>
    <property type="match status" value="1"/>
</dbReference>
<dbReference type="PROSITE" id="PS50197">
    <property type="entry name" value="BEACH"/>
    <property type="match status" value="1"/>
</dbReference>
<dbReference type="PROSITE" id="PS51783">
    <property type="entry name" value="PH_BEACH"/>
    <property type="match status" value="1"/>
</dbReference>
<dbReference type="PROSITE" id="PS00678">
    <property type="entry name" value="WD_REPEATS_1"/>
    <property type="match status" value="1"/>
</dbReference>
<dbReference type="PROSITE" id="PS50082">
    <property type="entry name" value="WD_REPEATS_2"/>
    <property type="match status" value="1"/>
</dbReference>
<dbReference type="PROSITE" id="PS50294">
    <property type="entry name" value="WD_REPEATS_REGION"/>
    <property type="match status" value="1"/>
</dbReference>
<dbReference type="PROSITE" id="PS50178">
    <property type="entry name" value="ZF_FYVE"/>
    <property type="match status" value="1"/>
</dbReference>
<sequence length="3508" mass="392338">MNMVKRIMGRPRQEECSPQDNALGLMHLRRLFTELCHPPRHMTQKEQEEKLYMMLPVFNRVFGNAPPNTMTEKFSDLLQFTTQVSRLMVTEIRRRASNKSTEAASRAIVQFLEINQSEEASRGWMLLTTINLLASSGQKTVDCMTTMSVPSTLVKCLYLFFDLPHVPEAGGGAQNELPLAERRGLLQKAFVQILVKLCSFVSPAEELAQKDDLQLLFSAITSWCPPYNLPWRKSAGEVLMTISRHGLSVNVVKYIHEKECLSTCVQNMQQSDDLSPLEIVEMFAGLSCFLKDSSDVSQTLLDDFRIWQGYNFLCDLLLRLEQGKEAECRDALKDLVSLVTSLTTYGVSELKPAGVTTGAPFLLPGFAVPQPAGKGHSVRNIQAFAVLQNAFLKAKTNFLAQIILDAITNIYMADNANYFILESQHTLSQFAEKISKLPEVQNKYFEMLEFVVFSLNYIPCKELISVSILLKSSSSYHCSIIAMKTLLKFTRHDYIFKDVFREVGLLEVMVNLLHKYAALLKDPAQALNEQGDSRNNSSVEDQKHLALLVMEALTVLLQGSNTNAGIFREFGGARCAHNIVKYPQCRQHALMTIQQLVLSPNGEDDMGTLLGLMHSAPPTELQLKTDILRALLSVLRESHRSRTVFRKVGGFVYITSLLVAMERSLSSPPKNGWEKVSQSQVLELLHTVFCTLTAALRYEPANSHFFKTEIQYEKLADAVRFLGCFSDLRKISAVNVFPSNTQPFQRLLEEGAVSVDSVSPTLRHCSKLFIYLYKVATDSFDSHAEQIPPCLTSESSLPSPWGTPALSRKRHAFHCVSTPPVYPAKNVTDLKLQVTSSPLQSSDAVIIHPGAMLAMLDLLASVGSVTQPEHALDLQLAVANILQSLVHTERNQQVMCEAGLHARLLQRCGAALADEDHSLHPPLQRMFERLASQALEPMVLREFLRLASPLNCGAWDKKLLKQYRVHKPSSLSFEPEMRSSVITSLEGLGSDNVFSSHEDNHYRISKSLVKSAEGSTVPLTRVKCLVSMTTPHDIRLHGSSVTPAFVEFDTSLEGFGCLFLPSLAPHNAPTNNTVTTGLTDGAVVSGMGSGERFFPPPSGLSYSCWFCIEHFSSPPNNHPVRLLTVVRRANSSEQHYVCLAIVLSAKDRSLIVSTKEELLQNYVDDFSEESSFYEILPCCARFRCGELVVEGQWHHLALLMSRGMLKNSTAALYLDGQLVSTVKLHYVHSTPGGSGSANPPVLSTVYAYVGTPPAQRQIASLVWRLGPTHFLEEVLPPSSVTTIYELGPNYVGSFQAVCVPCKDAKSEGVTPSPVSLVAEEKVSFGLYALSVSSLTVARIRKVYNKLDSKAIAKQLGISSHENATPVKLVHNAAGHLNGPARTIGAALIGYLGVRTFVPKPVATTLQYIGGAAAILGLVAMASDVEGLYAAVKALVCVVKSNPLASKEMERIKGYQLLAMLLKKKRSLLNSHILHLTFSLVGTVDSGHETSIIPNSTAFQDLLCDFEVWLHAPYELHLSLFEHFIELLTESSEASKNAKLMREFQLIPKLLLTLRDMSLSQPTIAAISNVLSFLLQGFPNSNDLLRFGQFISSTLPTFAVCEKFVVMEINNEEKPDPGAEEEFGGLVSANLILLRNRLLDILLKLVYTSKEKTNINLQACEELVRTLGFDWIMMFMEEHLHPTTVTAAMRILVVLLSNQSILIKFKEGLSGGGWLEQTDSVLTNKIGTVLGFNVGRSAGGRSTVREINRDACHFPGFLVLQSFLPKHTNVPALYFLLMALFLQQPVSELPENLQVSVPVTSSRCKQGCQFDLDSIWTFIFGVPASSGTVVSSIHNVCTESAFLLLGMLRSMLNSPWQSEEEGSWLREYPVTLMQFFRYLYHNVPDLASMWLSPDFLCALAATVFPFNIRPYSEMVTDLDDEVGSPAEEFKAFAADTGMNRSQSEYCNVGTKTYLTNHPAKKFVFDFMRVLIIDNLCLTPASKQTPLIDLLLEASPERSTRTQQKEFQTHVLDSVMDHLLAADVLLGEDASLPITSGGSYQVLVNNVFYFTQRVVDKLWQGMFNKESKLLIDFIIQLIAQSKRRSQGLSLDAVYHCLNRTILYQFSRAHKTVPQQVALLDSLRVLTVNRNLILGPGNHDQEFISCLAHCLINLHAGSVEGFGLEAEARMTTWHIMIPSDIEPDGGYSQDISEGRQLLIKAVNRVWTELIHSKKQVLEELFKVSLPVNDRGHVDIALARPLIEEAGLKCWQNHLAHEKKCISRGEALVPTTQSKLSRVSSGFGLSKLTGSRRNRKESGLHKHSPSPQEISQWMFTHIAVVRDLVDTQYKEYQERQQNALKYVTEEWCQIECELLRERGLWGPPIGSHLDKWMLEMTEGPCRMRKKMVRNDMFYNHYPYVPETEQEASVGKPARYRRAISYDSKEYYLRLASGNPAIVQDAIVESSEGEATQQEPEHGEDTIAKVKGLVKPPLKRSRSAPDGGDEETQEQLQDQIAESGSIEEEEKTDNATLLRLLEEGEKIQHMYRCARVQGLDTSEGLLLFGKEHFYVIDGFTMTATREIRDIETLPPNMHEPIIPRGARQGPSQLKRTCSIFAYEDIKEVHKRRYLLQPIAVEVFSGDGRNYLLAFQKGIRNKVYQRFLAVVPSLTDSSESVSGQRPNTSVEQGSGLLSTLVGEKSVTQRWERGEISNFQYLMHLNTLAGRSYNDLMQYPVFPWILSDYDSEEVDLTNPKTFRNLAKPMGAQTDERLAQYKKRYKDWEDPNGETPAYHYGTHYSSAMIVASYLVRMEPFTQIFLRLQGGHFDLADRMFHSVREAWYSASKHNMADVKELIPEFFYLPEFLFNSNNFDLGCKQNGTKLGDVILPPWAKGDPREFIRVHREALECDYVSAHLHEWIDLIFGYKQQGPAAVEAVNVFHHLFYEGQVDIYNINDPLKETATIGFINNFGQIPKQLFKKPHPPKRVRSRLNGDNIGISVPPGATSDKIFFHHLDNLRPSLTPVKELKEPVGQIVCTDKGILAVEQNKVLIPPAWNKTFAWGYADLSCRLGTYESDKAVTVYECLSEWGQILCAVCPNPKLVITGGTSTVVCVWEMGTSKEKAKPLTLKQALLGHTDTVTCATASLAYHIIVSGSRDRTCIIWDLNKLSFLTQLRGHRAPVSALCINELTGDIVSCAGTYIHVWSINGNPIVSVNTFTGRSQQIVCCCMSEMNEWDTQNVIVTGHSDGVVRFWRMEFLQVPETPAPEPVEDLEMQEGCPEAQIGQQAQDDDSSDSETEEPSVSQDPKDTSSQPSSTSHRPRAASCRATATWCTDSGSDDSRRWSDQLSLDEKDGFIFVNYSEGQTRAHLQGPLAHPHPNPIEARSYSRLKPGYRWERQLVFRSKLTMHTAFDRKDNTHPAEVTALGVSKDHSRILVGDSRGRVFSWSVSDQPGRSAADHWVKDEGGDSCSGCSVRFSLTERRHHCRNCGQLFCQKCSRFQSEIKRLKISSPVRVCQNCYYSLQHERGAEDGPRNC</sequence>
<reference key="1">
    <citation type="journal article" date="2004" name="Cell Struct. Funct.">
        <title>Expression profile of mouse BWF1, a protein with a BEACH domain, WD40 domain and FYVE domain.</title>
        <authorList>
            <person name="Chen G.-Y."/>
            <person name="Muramatsu H."/>
            <person name="Ichihara-Tanaka K."/>
            <person name="Muramatsu T."/>
        </authorList>
    </citation>
    <scope>NUCLEOTIDE SEQUENCE [MRNA] (ISOFORM 1)</scope>
    <scope>SUBCELLULAR LOCATION</scope>
    <scope>DEVELOPMENTAL STAGE</scope>
    <scope>TISSUE SPECIFICITY</scope>
    <source>
        <strain>ICR</strain>
        <tissue>Embryonic brain</tissue>
        <tissue>Embryonic liver</tissue>
    </source>
</reference>
<reference key="2">
    <citation type="journal article" date="2005" name="Science">
        <title>The transcriptional landscape of the mammalian genome.</title>
        <authorList>
            <person name="Carninci P."/>
            <person name="Kasukawa T."/>
            <person name="Katayama S."/>
            <person name="Gough J."/>
            <person name="Frith M.C."/>
            <person name="Maeda N."/>
            <person name="Oyama R."/>
            <person name="Ravasi T."/>
            <person name="Lenhard B."/>
            <person name="Wells C."/>
            <person name="Kodzius R."/>
            <person name="Shimokawa K."/>
            <person name="Bajic V.B."/>
            <person name="Brenner S.E."/>
            <person name="Batalov S."/>
            <person name="Forrest A.R."/>
            <person name="Zavolan M."/>
            <person name="Davis M.J."/>
            <person name="Wilming L.G."/>
            <person name="Aidinis V."/>
            <person name="Allen J.E."/>
            <person name="Ambesi-Impiombato A."/>
            <person name="Apweiler R."/>
            <person name="Aturaliya R.N."/>
            <person name="Bailey T.L."/>
            <person name="Bansal M."/>
            <person name="Baxter L."/>
            <person name="Beisel K.W."/>
            <person name="Bersano T."/>
            <person name="Bono H."/>
            <person name="Chalk A.M."/>
            <person name="Chiu K.P."/>
            <person name="Choudhary V."/>
            <person name="Christoffels A."/>
            <person name="Clutterbuck D.R."/>
            <person name="Crowe M.L."/>
            <person name="Dalla E."/>
            <person name="Dalrymple B.P."/>
            <person name="de Bono B."/>
            <person name="Della Gatta G."/>
            <person name="di Bernardo D."/>
            <person name="Down T."/>
            <person name="Engstrom P."/>
            <person name="Fagiolini M."/>
            <person name="Faulkner G."/>
            <person name="Fletcher C.F."/>
            <person name="Fukushima T."/>
            <person name="Furuno M."/>
            <person name="Futaki S."/>
            <person name="Gariboldi M."/>
            <person name="Georgii-Hemming P."/>
            <person name="Gingeras T.R."/>
            <person name="Gojobori T."/>
            <person name="Green R.E."/>
            <person name="Gustincich S."/>
            <person name="Harbers M."/>
            <person name="Hayashi Y."/>
            <person name="Hensch T.K."/>
            <person name="Hirokawa N."/>
            <person name="Hill D."/>
            <person name="Huminiecki L."/>
            <person name="Iacono M."/>
            <person name="Ikeo K."/>
            <person name="Iwama A."/>
            <person name="Ishikawa T."/>
            <person name="Jakt M."/>
            <person name="Kanapin A."/>
            <person name="Katoh M."/>
            <person name="Kawasawa Y."/>
            <person name="Kelso J."/>
            <person name="Kitamura H."/>
            <person name="Kitano H."/>
            <person name="Kollias G."/>
            <person name="Krishnan S.P."/>
            <person name="Kruger A."/>
            <person name="Kummerfeld S.K."/>
            <person name="Kurochkin I.V."/>
            <person name="Lareau L.F."/>
            <person name="Lazarevic D."/>
            <person name="Lipovich L."/>
            <person name="Liu J."/>
            <person name="Liuni S."/>
            <person name="McWilliam S."/>
            <person name="Madan Babu M."/>
            <person name="Madera M."/>
            <person name="Marchionni L."/>
            <person name="Matsuda H."/>
            <person name="Matsuzawa S."/>
            <person name="Miki H."/>
            <person name="Mignone F."/>
            <person name="Miyake S."/>
            <person name="Morris K."/>
            <person name="Mottagui-Tabar S."/>
            <person name="Mulder N."/>
            <person name="Nakano N."/>
            <person name="Nakauchi H."/>
            <person name="Ng P."/>
            <person name="Nilsson R."/>
            <person name="Nishiguchi S."/>
            <person name="Nishikawa S."/>
            <person name="Nori F."/>
            <person name="Ohara O."/>
            <person name="Okazaki Y."/>
            <person name="Orlando V."/>
            <person name="Pang K.C."/>
            <person name="Pavan W.J."/>
            <person name="Pavesi G."/>
            <person name="Pesole G."/>
            <person name="Petrovsky N."/>
            <person name="Piazza S."/>
            <person name="Reed J."/>
            <person name="Reid J.F."/>
            <person name="Ring B.Z."/>
            <person name="Ringwald M."/>
            <person name="Rost B."/>
            <person name="Ruan Y."/>
            <person name="Salzberg S.L."/>
            <person name="Sandelin A."/>
            <person name="Schneider C."/>
            <person name="Schoenbach C."/>
            <person name="Sekiguchi K."/>
            <person name="Semple C.A."/>
            <person name="Seno S."/>
            <person name="Sessa L."/>
            <person name="Sheng Y."/>
            <person name="Shibata Y."/>
            <person name="Shimada H."/>
            <person name="Shimada K."/>
            <person name="Silva D."/>
            <person name="Sinclair B."/>
            <person name="Sperling S."/>
            <person name="Stupka E."/>
            <person name="Sugiura K."/>
            <person name="Sultana R."/>
            <person name="Takenaka Y."/>
            <person name="Taki K."/>
            <person name="Tammoja K."/>
            <person name="Tan S.L."/>
            <person name="Tang S."/>
            <person name="Taylor M.S."/>
            <person name="Tegner J."/>
            <person name="Teichmann S.A."/>
            <person name="Ueda H.R."/>
            <person name="van Nimwegen E."/>
            <person name="Verardo R."/>
            <person name="Wei C.L."/>
            <person name="Yagi K."/>
            <person name="Yamanishi H."/>
            <person name="Zabarovsky E."/>
            <person name="Zhu S."/>
            <person name="Zimmer A."/>
            <person name="Hide W."/>
            <person name="Bult C."/>
            <person name="Grimmond S.M."/>
            <person name="Teasdale R.D."/>
            <person name="Liu E.T."/>
            <person name="Brusic V."/>
            <person name="Quackenbush J."/>
            <person name="Wahlestedt C."/>
            <person name="Mattick J.S."/>
            <person name="Hume D.A."/>
            <person name="Kai C."/>
            <person name="Sasaki D."/>
            <person name="Tomaru Y."/>
            <person name="Fukuda S."/>
            <person name="Kanamori-Katayama M."/>
            <person name="Suzuki M."/>
            <person name="Aoki J."/>
            <person name="Arakawa T."/>
            <person name="Iida J."/>
            <person name="Imamura K."/>
            <person name="Itoh M."/>
            <person name="Kato T."/>
            <person name="Kawaji H."/>
            <person name="Kawagashira N."/>
            <person name="Kawashima T."/>
            <person name="Kojima M."/>
            <person name="Kondo S."/>
            <person name="Konno H."/>
            <person name="Nakano K."/>
            <person name="Ninomiya N."/>
            <person name="Nishio T."/>
            <person name="Okada M."/>
            <person name="Plessy C."/>
            <person name="Shibata K."/>
            <person name="Shiraki T."/>
            <person name="Suzuki S."/>
            <person name="Tagami M."/>
            <person name="Waki K."/>
            <person name="Watahiki A."/>
            <person name="Okamura-Oho Y."/>
            <person name="Suzuki H."/>
            <person name="Kawai J."/>
            <person name="Hayashizaki Y."/>
        </authorList>
    </citation>
    <scope>NUCLEOTIDE SEQUENCE [LARGE SCALE MRNA] (ISOFORM 2)</scope>
    <source>
        <strain>C57BL/6J</strain>
        <tissue>Cerebellum</tissue>
    </source>
</reference>
<reference key="3">
    <citation type="journal article" date="2004" name="J. Cell Sci.">
        <title>Alfy, a novel FYVE-domain-containing protein associated with protein granules and autophagic membranes.</title>
        <authorList>
            <person name="Simonsen A."/>
            <person name="Birkeland H.C.G."/>
            <person name="Gillooly D.J."/>
            <person name="Mizushima N."/>
            <person name="Kuma A."/>
            <person name="Yoshimori T."/>
            <person name="Slagsvold T."/>
            <person name="Brech A."/>
            <person name="Stenmark H."/>
        </authorList>
    </citation>
    <scope>TISSUE SPECIFICITY</scope>
</reference>
<reference key="4">
    <citation type="journal article" date="2009" name="Immunity">
        <title>The phagosomal proteome in interferon-gamma-activated macrophages.</title>
        <authorList>
            <person name="Trost M."/>
            <person name="English L."/>
            <person name="Lemieux S."/>
            <person name="Courcelles M."/>
            <person name="Desjardins M."/>
            <person name="Thibault P."/>
        </authorList>
    </citation>
    <scope>IDENTIFICATION BY MASS SPECTROMETRY [LARGE SCALE ANALYSIS]</scope>
</reference>
<reference key="5">
    <citation type="journal article" date="2010" name="Cell">
        <title>A tissue-specific atlas of mouse protein phosphorylation and expression.</title>
        <authorList>
            <person name="Huttlin E.L."/>
            <person name="Jedrychowski M.P."/>
            <person name="Elias J.E."/>
            <person name="Goswami T."/>
            <person name="Rad R."/>
            <person name="Beausoleil S.A."/>
            <person name="Villen J."/>
            <person name="Haas W."/>
            <person name="Sowa M.E."/>
            <person name="Gygi S.P."/>
        </authorList>
    </citation>
    <scope>PHOSPHORYLATION [LARGE SCALE ANALYSIS] AT SER-1942; SER-2474 AND SER-3317</scope>
    <scope>IDENTIFICATION BY MASS SPECTROMETRY [LARGE SCALE ANALYSIS]</scope>
    <source>
        <tissue>Brain</tissue>
        <tissue>Brown adipose tissue</tissue>
        <tissue>Heart</tissue>
        <tissue>Kidney</tissue>
        <tissue>Liver</tissue>
        <tissue>Lung</tissue>
        <tissue>Spleen</tissue>
        <tissue>Testis</tissue>
    </source>
</reference>
<reference key="6">
    <citation type="journal article" date="2014" name="Nat. Commun.">
        <title>Loss of Wdfy3 in mice alters cerebral cortical neurogenesis reflecting aspects of the autism pathology.</title>
        <authorList>
            <person name="Orosco L.A."/>
            <person name="Ross A.P."/>
            <person name="Cates S.L."/>
            <person name="Scott S.E."/>
            <person name="Wu D."/>
            <person name="Sohn J."/>
            <person name="Pleasure D."/>
            <person name="Pleasure S.J."/>
            <person name="Adamopoulos I.E."/>
            <person name="Zarbalis K.S."/>
        </authorList>
    </citation>
    <scope>FUNCTION</scope>
    <scope>DISRUPTION PHENOTYPE</scope>
    <scope>SUBCELLULAR LOCATION</scope>
    <scope>DEVELOPMENTAL STAGE</scope>
</reference>
<reference key="7">
    <citation type="journal article" date="2016" name="Elife">
        <title>Autophagy linked FYVE (Alfy/WDFY3) is required for establishing neuronal connectivity in the mammalian brain.</title>
        <authorList>
            <person name="Dragich J.M."/>
            <person name="Kuwajima T."/>
            <person name="Hirose-Ikeda M."/>
            <person name="Yoon M.S."/>
            <person name="Eenjes E."/>
            <person name="Bosco J.R."/>
            <person name="Fox L.M."/>
            <person name="Lystad A.H."/>
            <person name="Oo T.F."/>
            <person name="Yarygina O."/>
            <person name="Mita T."/>
            <person name="Waguri S."/>
            <person name="Ichimura Y."/>
            <person name="Komatsu M."/>
            <person name="Simonsen A."/>
            <person name="Burke R.E."/>
            <person name="Mason C.A."/>
            <person name="Yamamoto A."/>
        </authorList>
    </citation>
    <scope>FUNCTION</scope>
    <scope>SUBCELLULAR LOCATION</scope>
    <scope>TISSUE SPECIFICITY</scope>
    <scope>DEVELOPMENTAL STAGE</scope>
    <scope>DISRUPTION PHENOTYPE</scope>
</reference>
<reference key="8">
    <citation type="journal article" date="2016" name="J. Autoimmun.">
        <title>Autophagy-linked FYVE containing protein WDFY3 interacts with TRAF6 and modulates RANKL-induced osteoclastogenesis.</title>
        <authorList>
            <person name="Wu D.J."/>
            <person name="Gu R."/>
            <person name="Sarin R."/>
            <person name="Zavodovskaya R."/>
            <person name="Chen C.P."/>
            <person name="Christiansen B.A."/>
            <person name="Adamopoulos I.E."/>
        </authorList>
    </citation>
    <scope>FUNCTION</scope>
    <scope>INTERACTION WITH TRAF6</scope>
    <scope>SUBCELLULAR LOCATION</scope>
    <scope>TISSUE SPECIFICITY</scope>
</reference>
<feature type="chain" id="PRO_0000242694" description="WD repeat and FYVE domain-containing protein 3">
    <location>
        <begin position="1"/>
        <end position="3508"/>
    </location>
</feature>
<feature type="domain" description="BEACH-type PH" evidence="5">
    <location>
        <begin position="2513"/>
        <end position="2638"/>
    </location>
</feature>
<feature type="domain" description="BEACH" evidence="3">
    <location>
        <begin position="2665"/>
        <end position="2958"/>
    </location>
</feature>
<feature type="repeat" description="WD 1">
    <location>
        <begin position="3059"/>
        <end position="3097"/>
    </location>
</feature>
<feature type="repeat" description="WD 2">
    <location>
        <begin position="3107"/>
        <end position="3146"/>
    </location>
</feature>
<feature type="repeat" description="WD 3">
    <location>
        <begin position="3149"/>
        <end position="3188"/>
    </location>
</feature>
<feature type="repeat" description="WD 4">
    <location>
        <begin position="3192"/>
        <end position="3236"/>
    </location>
</feature>
<feature type="repeat" description="WD 5">
    <location>
        <begin position="3390"/>
        <end position="3429"/>
    </location>
</feature>
<feature type="zinc finger region" description="FYVE-type" evidence="4">
    <location>
        <begin position="3436"/>
        <end position="3496"/>
    </location>
</feature>
<feature type="region of interest" description="Disordered" evidence="6">
    <location>
        <begin position="2279"/>
        <end position="2303"/>
    </location>
</feature>
<feature type="region of interest" description="Sufficient for translocalization to p62 bodies/ALIS" evidence="1">
    <location>
        <begin position="2284"/>
        <end position="2963"/>
    </location>
</feature>
<feature type="region of interest" description="Disordered" evidence="6">
    <location>
        <begin position="2441"/>
        <end position="2504"/>
    </location>
</feature>
<feature type="region of interest" description="Interaction with SQSTM1" evidence="1">
    <location>
        <begin position="2568"/>
        <end position="3508"/>
    </location>
</feature>
<feature type="region of interest" description="Interaction with ATG5" evidence="1">
    <location>
        <begin position="2963"/>
        <end position="3508"/>
    </location>
</feature>
<feature type="region of interest" description="Disordered" evidence="6">
    <location>
        <begin position="3254"/>
        <end position="3317"/>
    </location>
</feature>
<feature type="short sequence motif" description="LIR">
    <location>
        <begin position="3326"/>
        <end position="3331"/>
    </location>
</feature>
<feature type="compositionally biased region" description="Basic and acidic residues" evidence="6">
    <location>
        <begin position="2450"/>
        <end position="2459"/>
    </location>
</feature>
<feature type="compositionally biased region" description="Acidic residues" evidence="6">
    <location>
        <begin position="3261"/>
        <end position="3272"/>
    </location>
</feature>
<feature type="binding site" evidence="4">
    <location>
        <position position="3442"/>
    </location>
    <ligand>
        <name>Zn(2+)</name>
        <dbReference type="ChEBI" id="CHEBI:29105"/>
        <label>1</label>
    </ligand>
</feature>
<feature type="binding site" evidence="4">
    <location>
        <position position="3445"/>
    </location>
    <ligand>
        <name>Zn(2+)</name>
        <dbReference type="ChEBI" id="CHEBI:29105"/>
        <label>1</label>
    </ligand>
</feature>
<feature type="binding site" evidence="4">
    <location>
        <position position="3458"/>
    </location>
    <ligand>
        <name>Zn(2+)</name>
        <dbReference type="ChEBI" id="CHEBI:29105"/>
        <label>2</label>
    </ligand>
</feature>
<feature type="binding site" evidence="4">
    <location>
        <position position="3461"/>
    </location>
    <ligand>
        <name>Zn(2+)</name>
        <dbReference type="ChEBI" id="CHEBI:29105"/>
        <label>2</label>
    </ligand>
</feature>
<feature type="binding site" evidence="4">
    <location>
        <position position="3466"/>
    </location>
    <ligand>
        <name>Zn(2+)</name>
        <dbReference type="ChEBI" id="CHEBI:29105"/>
        <label>1</label>
    </ligand>
</feature>
<feature type="binding site" evidence="4">
    <location>
        <position position="3469"/>
    </location>
    <ligand>
        <name>Zn(2+)</name>
        <dbReference type="ChEBI" id="CHEBI:29105"/>
        <label>1</label>
    </ligand>
</feature>
<feature type="binding site" evidence="4">
    <location>
        <position position="3488"/>
    </location>
    <ligand>
        <name>Zn(2+)</name>
        <dbReference type="ChEBI" id="CHEBI:29105"/>
        <label>2</label>
    </ligand>
</feature>
<feature type="binding site" evidence="4">
    <location>
        <position position="3491"/>
    </location>
    <ligand>
        <name>Zn(2+)</name>
        <dbReference type="ChEBI" id="CHEBI:29105"/>
        <label>2</label>
    </ligand>
</feature>
<feature type="modified residue" description="Phosphoserine" evidence="15">
    <location>
        <position position="1942"/>
    </location>
</feature>
<feature type="modified residue" description="Phosphoserine" evidence="2">
    <location>
        <position position="2277"/>
    </location>
</feature>
<feature type="modified residue" description="Phosphoserine" evidence="15">
    <location>
        <position position="2474"/>
    </location>
</feature>
<feature type="modified residue" description="Phosphoserine" evidence="15">
    <location>
        <position position="3317"/>
    </location>
</feature>
<feature type="modified residue" description="Phosphoserine" evidence="2">
    <location>
        <position position="3321"/>
    </location>
</feature>
<feature type="splice variant" id="VSP_019477" description="In isoform 2." evidence="12">
    <location>
        <begin position="782"/>
        <end position="809"/>
    </location>
</feature>
<feature type="splice variant" id="VSP_019478" description="In isoform 2." evidence="12">
    <location>
        <begin position="942"/>
        <end position="3508"/>
    </location>
</feature>